<gene>
    <name type="primary">Jmjd1c</name>
    <name type="synonym">Jhdm2c</name>
    <name type="synonym">Kiaa1380</name>
</gene>
<keyword id="KW-0156">Chromatin regulator</keyword>
<keyword id="KW-0223">Dioxygenase</keyword>
<keyword id="KW-0903">Direct protein sequencing</keyword>
<keyword id="KW-0408">Iron</keyword>
<keyword id="KW-1017">Isopeptide bond</keyword>
<keyword id="KW-0479">Metal-binding</keyword>
<keyword id="KW-0539">Nucleus</keyword>
<keyword id="KW-0560">Oxidoreductase</keyword>
<keyword id="KW-0597">Phosphoprotein</keyword>
<keyword id="KW-1185">Reference proteome</keyword>
<keyword id="KW-0804">Transcription</keyword>
<keyword id="KW-0805">Transcription regulation</keyword>
<keyword id="KW-0832">Ubl conjugation</keyword>
<keyword id="KW-0862">Zinc</keyword>
<keyword id="KW-0863">Zinc-finger</keyword>
<dbReference type="EC" id="1.14.11.-"/>
<dbReference type="EMBL" id="AK173162">
    <property type="protein sequence ID" value="BAD32440.1"/>
    <property type="status" value="ALT_INIT"/>
    <property type="molecule type" value="mRNA"/>
</dbReference>
<dbReference type="EMBL" id="AC155712">
    <property type="status" value="NOT_ANNOTATED_CDS"/>
    <property type="molecule type" value="Genomic_DNA"/>
</dbReference>
<dbReference type="EMBL" id="AC156272">
    <property type="status" value="NOT_ANNOTATED_CDS"/>
    <property type="molecule type" value="Genomic_DNA"/>
</dbReference>
<dbReference type="EMBL" id="AK077400">
    <property type="protein sequence ID" value="BAC36783.1"/>
    <property type="status" value="ALT_SEQ"/>
    <property type="molecule type" value="mRNA"/>
</dbReference>
<dbReference type="EMBL" id="AK082106">
    <property type="protein sequence ID" value="BAC38410.1"/>
    <property type="status" value="ALT_INIT"/>
    <property type="molecule type" value="mRNA"/>
</dbReference>
<dbReference type="EMBL" id="AK085500">
    <property type="protein sequence ID" value="BAC39458.1"/>
    <property type="molecule type" value="mRNA"/>
</dbReference>
<dbReference type="EMBL" id="BC068318">
    <property type="protein sequence ID" value="AAH68318.1"/>
    <property type="status" value="ALT_SEQ"/>
    <property type="molecule type" value="mRNA"/>
</dbReference>
<dbReference type="CCDS" id="CCDS56708.1"/>
<dbReference type="RefSeq" id="NP_001229325.1">
    <property type="nucleotide sequence ID" value="NM_001242396.1"/>
</dbReference>
<dbReference type="RefSeq" id="XP_006513104.1">
    <property type="nucleotide sequence ID" value="XM_006513041.4"/>
</dbReference>
<dbReference type="RefSeq" id="XP_006513105.1">
    <property type="nucleotide sequence ID" value="XM_006513042.5"/>
</dbReference>
<dbReference type="RefSeq" id="XP_030100665.1">
    <property type="nucleotide sequence ID" value="XM_030244805.2"/>
</dbReference>
<dbReference type="RefSeq" id="XP_036011379.1">
    <property type="nucleotide sequence ID" value="XM_036155486.1"/>
</dbReference>
<dbReference type="RefSeq" id="XP_036011380.1">
    <property type="nucleotide sequence ID" value="XM_036155487.1"/>
</dbReference>
<dbReference type="RefSeq" id="XP_036011381.1">
    <property type="nucleotide sequence ID" value="XM_036155488.1"/>
</dbReference>
<dbReference type="SMR" id="Q69ZK6"/>
<dbReference type="BioGRID" id="224438">
    <property type="interactions" value="8"/>
</dbReference>
<dbReference type="FunCoup" id="Q69ZK6">
    <property type="interactions" value="2488"/>
</dbReference>
<dbReference type="IntAct" id="Q69ZK6">
    <property type="interactions" value="1"/>
</dbReference>
<dbReference type="STRING" id="10090.ENSMUSP00000056227"/>
<dbReference type="GlyGen" id="Q69ZK6">
    <property type="glycosylation" value="22 sites, 1 O-linked glycan (22 sites)"/>
</dbReference>
<dbReference type="iPTMnet" id="Q69ZK6"/>
<dbReference type="PhosphoSitePlus" id="Q69ZK6"/>
<dbReference type="jPOST" id="Q69ZK6"/>
<dbReference type="PaxDb" id="10090-ENSMUSP00000133700"/>
<dbReference type="ProteomicsDB" id="269420"/>
<dbReference type="Pumba" id="Q69ZK6"/>
<dbReference type="Antibodypedia" id="28318">
    <property type="antibodies" value="138 antibodies from 28 providers"/>
</dbReference>
<dbReference type="Ensembl" id="ENSMUST00000173689.8">
    <property type="protein sequence ID" value="ENSMUSP00000133700.2"/>
    <property type="gene ID" value="ENSMUSG00000037876.18"/>
</dbReference>
<dbReference type="GeneID" id="108829"/>
<dbReference type="KEGG" id="mmu:108829"/>
<dbReference type="UCSC" id="uc007fls.2">
    <property type="organism name" value="mouse"/>
</dbReference>
<dbReference type="AGR" id="MGI:1918614"/>
<dbReference type="CTD" id="221037"/>
<dbReference type="MGI" id="MGI:1918614">
    <property type="gene designation" value="Jmjd1c"/>
</dbReference>
<dbReference type="VEuPathDB" id="HostDB:ENSMUSG00000037876"/>
<dbReference type="eggNOG" id="KOG1356">
    <property type="taxonomic scope" value="Eukaryota"/>
</dbReference>
<dbReference type="GeneTree" id="ENSGT00940000158210"/>
<dbReference type="InParanoid" id="Q69ZK6"/>
<dbReference type="OMA" id="PNKTSKM"/>
<dbReference type="TreeFam" id="TF324723"/>
<dbReference type="Reactome" id="R-MMU-983231">
    <property type="pathway name" value="Factors involved in megakaryocyte development and platelet production"/>
</dbReference>
<dbReference type="BioGRID-ORCS" id="108829">
    <property type="hits" value="3 hits in 82 CRISPR screens"/>
</dbReference>
<dbReference type="ChiTaRS" id="Jmjd1c">
    <property type="organism name" value="mouse"/>
</dbReference>
<dbReference type="PRO" id="PR:Q69ZK6"/>
<dbReference type="Proteomes" id="UP000000589">
    <property type="component" value="Chromosome 10"/>
</dbReference>
<dbReference type="RNAct" id="Q69ZK6">
    <property type="molecule type" value="protein"/>
</dbReference>
<dbReference type="Bgee" id="ENSMUSG00000037876">
    <property type="expression patterns" value="Expressed in uterus and 76 other cell types or tissues"/>
</dbReference>
<dbReference type="ExpressionAtlas" id="Q69ZK6">
    <property type="expression patterns" value="baseline and differential"/>
</dbReference>
<dbReference type="GO" id="GO:0005634">
    <property type="term" value="C:nucleus"/>
    <property type="evidence" value="ECO:0007669"/>
    <property type="project" value="UniProtKB-SubCell"/>
</dbReference>
<dbReference type="GO" id="GO:0051213">
    <property type="term" value="F:dioxygenase activity"/>
    <property type="evidence" value="ECO:0007669"/>
    <property type="project" value="UniProtKB-KW"/>
</dbReference>
<dbReference type="GO" id="GO:0032454">
    <property type="term" value="F:histone H3K9 demethylase activity"/>
    <property type="evidence" value="ECO:0007669"/>
    <property type="project" value="InterPro"/>
</dbReference>
<dbReference type="GO" id="GO:0008270">
    <property type="term" value="F:zinc ion binding"/>
    <property type="evidence" value="ECO:0007669"/>
    <property type="project" value="UniProtKB-KW"/>
</dbReference>
<dbReference type="GO" id="GO:0003382">
    <property type="term" value="P:epithelial cell morphogenesis"/>
    <property type="evidence" value="ECO:0000315"/>
    <property type="project" value="MGI"/>
</dbReference>
<dbReference type="GO" id="GO:0098727">
    <property type="term" value="P:maintenance of cell number"/>
    <property type="evidence" value="ECO:0000315"/>
    <property type="project" value="MGI"/>
</dbReference>
<dbReference type="GO" id="GO:0036098">
    <property type="term" value="P:male germ-line stem cell population maintenance"/>
    <property type="evidence" value="ECO:0000315"/>
    <property type="project" value="MGI"/>
</dbReference>
<dbReference type="GO" id="GO:0008584">
    <property type="term" value="P:male gonad development"/>
    <property type="evidence" value="ECO:0000315"/>
    <property type="project" value="MGI"/>
</dbReference>
<dbReference type="GO" id="GO:0072520">
    <property type="term" value="P:seminiferous tubule development"/>
    <property type="evidence" value="ECO:0000315"/>
    <property type="project" value="MGI"/>
</dbReference>
<dbReference type="FunFam" id="2.60.120.650:FF:000008">
    <property type="entry name" value="Probable JmjC domain-containing histone demethylation protein 2C"/>
    <property type="match status" value="1"/>
</dbReference>
<dbReference type="Gene3D" id="2.60.120.650">
    <property type="entry name" value="Cupin"/>
    <property type="match status" value="1"/>
</dbReference>
<dbReference type="InterPro" id="IPR045109">
    <property type="entry name" value="JHDM2-like"/>
</dbReference>
<dbReference type="InterPro" id="IPR003347">
    <property type="entry name" value="JmjC_dom"/>
</dbReference>
<dbReference type="InterPro" id="IPR054503">
    <property type="entry name" value="KDM3AB_Tudor"/>
</dbReference>
<dbReference type="PANTHER" id="PTHR12549">
    <property type="entry name" value="JMJC DOMAIN-CONTAINING HISTONE DEMETHYLATION PROTEIN"/>
    <property type="match status" value="1"/>
</dbReference>
<dbReference type="PANTHER" id="PTHR12549:SF6">
    <property type="entry name" value="JMJC DOMAIN-CONTAINING HISTONE DEMETHYLATION PROTEIN 2C-RELATED"/>
    <property type="match status" value="1"/>
</dbReference>
<dbReference type="Pfam" id="PF02373">
    <property type="entry name" value="JmjC"/>
    <property type="match status" value="1"/>
</dbReference>
<dbReference type="Pfam" id="PF22987">
    <property type="entry name" value="Tudor_KDM3B"/>
    <property type="match status" value="1"/>
</dbReference>
<dbReference type="SMART" id="SM00558">
    <property type="entry name" value="JmjC"/>
    <property type="match status" value="1"/>
</dbReference>
<dbReference type="SUPFAM" id="SSF51197">
    <property type="entry name" value="Clavaminate synthase-like"/>
    <property type="match status" value="1"/>
</dbReference>
<dbReference type="PROSITE" id="PS51184">
    <property type="entry name" value="JMJC"/>
    <property type="match status" value="1"/>
</dbReference>
<accession>Q69ZK6</accession>
<accession>E9QMM8</accession>
<accession>Q6NV48</accession>
<accession>Q8BUF5</accession>
<accession>Q8C4I5</accession>
<accession>Q8C5Q9</accession>
<name>JHD2C_MOUSE</name>
<feature type="chain" id="PRO_0000234375" description="Probable JmjC domain-containing histone demethylation protein 2C">
    <location>
        <begin position="1"/>
        <end position="2350"/>
    </location>
</feature>
<feature type="domain" description="JmjC" evidence="4">
    <location>
        <begin position="2084"/>
        <end position="2308"/>
    </location>
</feature>
<feature type="zinc finger region" description="C6-type" evidence="3">
    <location>
        <begin position="1657"/>
        <end position="1682"/>
    </location>
</feature>
<feature type="region of interest" description="Disordered" evidence="5">
    <location>
        <begin position="96"/>
        <end position="302"/>
    </location>
</feature>
<feature type="region of interest" description="Disordered" evidence="5">
    <location>
        <begin position="314"/>
        <end position="336"/>
    </location>
</feature>
<feature type="region of interest" description="Disordered" evidence="5">
    <location>
        <begin position="426"/>
        <end position="486"/>
    </location>
</feature>
<feature type="region of interest" description="Disordered" evidence="5">
    <location>
        <begin position="747"/>
        <end position="766"/>
    </location>
</feature>
<feature type="region of interest" description="Disordered" evidence="5">
    <location>
        <begin position="859"/>
        <end position="883"/>
    </location>
</feature>
<feature type="region of interest" description="Disordered" evidence="5">
    <location>
        <begin position="1030"/>
        <end position="1083"/>
    </location>
</feature>
<feature type="region of interest" description="Disordered" evidence="5">
    <location>
        <begin position="1422"/>
        <end position="1508"/>
    </location>
</feature>
<feature type="region of interest" description="Disordered" evidence="5">
    <location>
        <begin position="1776"/>
        <end position="1874"/>
    </location>
</feature>
<feature type="region of interest" description="Disordered" evidence="5">
    <location>
        <begin position="1933"/>
        <end position="1962"/>
    </location>
</feature>
<feature type="short sequence motif" description="LXXLL motif">
    <location>
        <begin position="1876"/>
        <end position="1880"/>
    </location>
</feature>
<feature type="compositionally biased region" description="Polar residues" evidence="5">
    <location>
        <begin position="98"/>
        <end position="127"/>
    </location>
</feature>
<feature type="compositionally biased region" description="Basic and acidic residues" evidence="5">
    <location>
        <begin position="141"/>
        <end position="160"/>
    </location>
</feature>
<feature type="compositionally biased region" description="Basic residues" evidence="5">
    <location>
        <begin position="161"/>
        <end position="171"/>
    </location>
</feature>
<feature type="compositionally biased region" description="Basic and acidic residues" evidence="5">
    <location>
        <begin position="172"/>
        <end position="189"/>
    </location>
</feature>
<feature type="compositionally biased region" description="Low complexity" evidence="5">
    <location>
        <begin position="190"/>
        <end position="200"/>
    </location>
</feature>
<feature type="compositionally biased region" description="Basic and acidic residues" evidence="5">
    <location>
        <begin position="257"/>
        <end position="280"/>
    </location>
</feature>
<feature type="compositionally biased region" description="Polar residues" evidence="5">
    <location>
        <begin position="281"/>
        <end position="302"/>
    </location>
</feature>
<feature type="compositionally biased region" description="Low complexity" evidence="5">
    <location>
        <begin position="863"/>
        <end position="874"/>
    </location>
</feature>
<feature type="compositionally biased region" description="Low complexity" evidence="5">
    <location>
        <begin position="1034"/>
        <end position="1045"/>
    </location>
</feature>
<feature type="compositionally biased region" description="Polar residues" evidence="5">
    <location>
        <begin position="1071"/>
        <end position="1083"/>
    </location>
</feature>
<feature type="compositionally biased region" description="Basic residues" evidence="5">
    <location>
        <begin position="1454"/>
        <end position="1463"/>
    </location>
</feature>
<feature type="compositionally biased region" description="Basic and acidic residues" evidence="5">
    <location>
        <begin position="1464"/>
        <end position="1480"/>
    </location>
</feature>
<feature type="compositionally biased region" description="Polar residues" evidence="5">
    <location>
        <begin position="1776"/>
        <end position="1818"/>
    </location>
</feature>
<feature type="compositionally biased region" description="Basic and acidic residues" evidence="5">
    <location>
        <begin position="1826"/>
        <end position="1849"/>
    </location>
</feature>
<feature type="compositionally biased region" description="Polar residues" evidence="5">
    <location>
        <begin position="1855"/>
        <end position="1874"/>
    </location>
</feature>
<feature type="binding site" evidence="4">
    <location>
        <position position="2146"/>
    </location>
    <ligand>
        <name>Fe cation</name>
        <dbReference type="ChEBI" id="CHEBI:24875"/>
        <note>catalytic</note>
    </ligand>
</feature>
<feature type="binding site" evidence="4">
    <location>
        <position position="2148"/>
    </location>
    <ligand>
        <name>Fe cation</name>
        <dbReference type="ChEBI" id="CHEBI:24875"/>
        <note>catalytic</note>
    </ligand>
</feature>
<feature type="binding site" evidence="4">
    <location>
        <position position="2276"/>
    </location>
    <ligand>
        <name>Fe cation</name>
        <dbReference type="ChEBI" id="CHEBI:24875"/>
        <note>catalytic</note>
    </ligand>
</feature>
<feature type="modified residue" description="Phosphoserine" evidence="7">
    <location>
        <position position="135"/>
    </location>
</feature>
<feature type="modified residue" description="Phosphoserine" evidence="7">
    <location>
        <position position="138"/>
    </location>
</feature>
<feature type="modified residue" description="Phosphoserine" evidence="2">
    <location>
        <position position="191"/>
    </location>
</feature>
<feature type="modified residue" description="Phosphoserine" evidence="2">
    <location>
        <position position="194"/>
    </location>
</feature>
<feature type="modified residue" description="Phosphoserine" evidence="7">
    <location>
        <position position="294"/>
    </location>
</feature>
<feature type="modified residue" description="Phosphoserine" evidence="2">
    <location>
        <position position="320"/>
    </location>
</feature>
<feature type="modified residue" description="Phosphothreonine" evidence="2">
    <location>
        <position position="324"/>
    </location>
</feature>
<feature type="modified residue" description="Phosphoserine" evidence="2">
    <location>
        <position position="420"/>
    </location>
</feature>
<feature type="modified residue" description="Phosphoserine" evidence="2">
    <location>
        <position position="436"/>
    </location>
</feature>
<feature type="modified residue" description="Phosphoserine" evidence="2">
    <location>
        <position position="457"/>
    </location>
</feature>
<feature type="modified residue" description="Phosphoserine" evidence="2">
    <location>
        <position position="458"/>
    </location>
</feature>
<feature type="modified residue" description="Phosphoserine" evidence="2">
    <location>
        <position position="460"/>
    </location>
</feature>
<feature type="modified residue" description="Phosphoserine" evidence="7">
    <location>
        <position position="471"/>
    </location>
</feature>
<feature type="modified residue" description="Phosphoserine" evidence="2">
    <location>
        <position position="762"/>
    </location>
</feature>
<feature type="modified residue" description="Phosphoserine" evidence="2">
    <location>
        <position position="1800"/>
    </location>
</feature>
<feature type="cross-link" description="Glycyl lysine isopeptide (Lys-Gly) (interchain with G-Cter in SUMO2)" evidence="2">
    <location>
        <position position="1942"/>
    </location>
</feature>
<feature type="sequence conflict" description="In Ref. 4; AAH68318." evidence="6" ref="4">
    <original>P</original>
    <variation>S</variation>
    <location>
        <position position="1506"/>
    </location>
</feature>
<feature type="sequence conflict" description="In Ref. 1; BAD32440." evidence="6" ref="1">
    <original>L</original>
    <variation>P</variation>
    <location>
        <position position="1715"/>
    </location>
</feature>
<feature type="sequence conflict" description="In Ref. 1; BAD32440." evidence="6" ref="1">
    <original>R</original>
    <variation>I</variation>
    <location>
        <position position="2189"/>
    </location>
</feature>
<organism>
    <name type="scientific">Mus musculus</name>
    <name type="common">Mouse</name>
    <dbReference type="NCBI Taxonomy" id="10090"/>
    <lineage>
        <taxon>Eukaryota</taxon>
        <taxon>Metazoa</taxon>
        <taxon>Chordata</taxon>
        <taxon>Craniata</taxon>
        <taxon>Vertebrata</taxon>
        <taxon>Euteleostomi</taxon>
        <taxon>Mammalia</taxon>
        <taxon>Eutheria</taxon>
        <taxon>Euarchontoglires</taxon>
        <taxon>Glires</taxon>
        <taxon>Rodentia</taxon>
        <taxon>Myomorpha</taxon>
        <taxon>Muroidea</taxon>
        <taxon>Muridae</taxon>
        <taxon>Murinae</taxon>
        <taxon>Mus</taxon>
        <taxon>Mus</taxon>
    </lineage>
</organism>
<sequence>MQGPYSLNGYRVRVYRQDSATQWFTGIITHHDLFTRTMIVMNDQVLEPQNVDPSMVQMTFLDDVVHSLLKGENIGITSRRRSRASQNISTVHGHYTRAQANSPRPAMNSQAAVPKQNTHQQQQQRSIRPNKRKGSDSSIPDEEKMKEDKYDCVSRGENPKGKNKHVVTKRRKPEEAEKRLSMKRLRTDNASDASESSDAESSSKRVTETSSSEPMPEYEPKNKVTSKVNGEEGQSQAAEEAGEETLIDTRPPWDQMQEDKNHNEGEKPKSTDSHLQDKMTLRSSEQATVADHNSNDSVLQECNVENQRTVELLPKDRLVSRTPTPKCVTDIKNDTHSERAAQENLNTFGLQTPENMDPNVSDSKHSNAKYLETAKQDCDQSWVSDVVKVDLTQSSVTNAPSGSDKRDTEKERNHYVSYMSSLSAVSVTEDQLHKRSPPPETIKAKLTTSVDTQKAKSSSSPEVVKPKITHSPDSVKSKAAYGNSQAVGERRLANKIEHELSRGSFHPVPTRGSALETTKSPLIIDKNEHFTVYRDPALIGSETGANHISPFLSQHPFSLHSSSHRTCLNPGTHHPALTPGPHLLAGSTSQTPLPTINTHPLTSGPHHPVHHPHLLPTVLPGVPTASLLGGHPRLESAHASSLSHLALAHQQQQQLLQHQSPHLLGQAHPSASYNQLGLYPIIWQYPNGTHAYSGLGLPSSKWVHPENAVNAEASLRRNSPSPWLHQPTPVTSADGIGLLSHIPVRPSSAEPHRPHKITVHSSPPLTKTLADHHKEELERKAFMEPLRSNASTSVKGDLDLNRSQAGKDCHLHRHFVGPRPPQETGERLNKYKEEHRRILQESIDVAPFTTKIKGHEVERENYSRVVPSSSSPKSHAIKQDKDVDRSVSEIYKMKHSVPQSLPQSNYFTTLSNSVVNEPPRSYPSKEVSNIYTEKQNNNLSATANPQTHSFISSLSKPPPLIKHQPESESLVGKIPDHLPHQSASHSVTTFRSDCRSPTHLTVSSTNALRSMPALHRAPVFHPPIHHSLERKESSYSSLSPPTLTPVMPVNAGGKVQESQKPPTLIPEPKDSQSNFKNSSDQSLTEMWRSNNNLNREKAEWPVEKSSGKSQAAVASVIVRPPSSTKVDSVPSVPLASKDRVCERSSSGANKTDYLKPEAGETGRIILPNVNLESAHVKSEKNFEAVSQGNVPVSVMSAVNVVSTTKADVFTSAATTTSVSSLSSAETSYSLSNTISASTPFECTSSKSVVSQAVAQAKDCTVSTAVPGTLACSKTGSAVQPGSGFSGTTDFIHLKKHKAALAAAQFKNSSVSEAELNTVRNQTVAASLPLDSTMTCTASNKAISVGNGPAAQSSQPNYHTKLKKAWLTRHSEEDKNTNKMENSGNSVSEIIKPCSVNLIASTSNDIENRADGRVAVDKYGRDEKVSRRKAKRTYESGSESGDSDESESKSEQRTKRQPKPTYKKKQNDLQKRKGEVEEDSKPNGVLSRSAKDKSKLKLQNSNSAGVPRSVLKDWRKVKKLKQTGESFLQDDSCCEIGPNLQKCRECRLIRSKKGEESTHSPVFCRFYYFRRLSFSKNGVVRIDGFSSPDQYDDEAMSLWTHENYEDDEVDVETSKYILDIIGDKFCQLVTSEKTALSWVKKDAKIAWKRAVRGVREMCDACEATLFNVHWVCRKCGFVACLDCYKAKERKSSRDKELYAWMKCVKGQPHDHKHLMLTQIIPGSVLTDLLDAMHILREKYGIKSHCHCTNRQNLQGGNVPTMNGVSQVLQNVLHHSNKTSVSLPESQQQNSPQKSQTNGNSSPGSASTDSRLTPPESQSPLHWLADLAEQKSREEKQENKEFTLEREIKEDGDQDASDSPNGSTSPPASQSNEQGSTLRDLLTTTAGKLRVGSTDAGIAFAPVYSMGTSSGKGGRTMPNILDDIIASVVENKIPPNKTSKINIKSEPNEEPKESSLPATDESNKSYRDIPHSWICDQHILWLKDYKNSNNWKLFKECWKQGQPAVVSGVHKKMNISLWKAESISLDFGDHQADLLNCKDSIVSNANVKEFWDGFEEVSKRQKNKGGETVVLKLKDCPSGEDFKAMMPTRYEDFLRCLPLPEYCNPEGKFNLASHLPGFFVRPDLGPRLCSAYGVAAAKDHDIGTTNLHIEASDVVNVLVYVGIAKGNGVLSKAGILKKFEEEELDDVLRKRLKDSSEIPGALWHIYAGKDVDKIREFLQKISKEQGLEVLPEHDPIRDQSWYVNRKLRQRLLEEYGVRACTLIQFLGDAIVLPAGTLHQVQNFHSCVQVTEDFVSPEHLVQSFHLTQELRLLKEEINYDDKLQVKNILYHAVKEMVRALKMHEDEVEDMEDT</sequence>
<reference key="1">
    <citation type="journal article" date="2004" name="DNA Res.">
        <title>Prediction of the coding sequences of mouse homologues of KIAA gene: IV. The complete nucleotide sequences of 500 mouse KIAA-homologous cDNAs identified by screening of terminal sequences of cDNA clones randomly sampled from size-fractionated libraries.</title>
        <authorList>
            <person name="Okazaki N."/>
            <person name="Kikuno R."/>
            <person name="Ohara R."/>
            <person name="Inamoto S."/>
            <person name="Koseki H."/>
            <person name="Hiraoka S."/>
            <person name="Saga Y."/>
            <person name="Seino S."/>
            <person name="Nishimura M."/>
            <person name="Kaisho T."/>
            <person name="Hoshino K."/>
            <person name="Kitamura H."/>
            <person name="Nagase T."/>
            <person name="Ohara O."/>
            <person name="Koga H."/>
        </authorList>
    </citation>
    <scope>NUCLEOTIDE SEQUENCE [LARGE SCALE MRNA]</scope>
    <source>
        <tissue>Embryonic intestine</tissue>
    </source>
</reference>
<reference key="2">
    <citation type="journal article" date="2009" name="PLoS Biol.">
        <title>Lineage-specific biology revealed by a finished genome assembly of the mouse.</title>
        <authorList>
            <person name="Church D.M."/>
            <person name="Goodstadt L."/>
            <person name="Hillier L.W."/>
            <person name="Zody M.C."/>
            <person name="Goldstein S."/>
            <person name="She X."/>
            <person name="Bult C.J."/>
            <person name="Agarwala R."/>
            <person name="Cherry J.L."/>
            <person name="DiCuccio M."/>
            <person name="Hlavina W."/>
            <person name="Kapustin Y."/>
            <person name="Meric P."/>
            <person name="Maglott D."/>
            <person name="Birtle Z."/>
            <person name="Marques A.C."/>
            <person name="Graves T."/>
            <person name="Zhou S."/>
            <person name="Teague B."/>
            <person name="Potamousis K."/>
            <person name="Churas C."/>
            <person name="Place M."/>
            <person name="Herschleb J."/>
            <person name="Runnheim R."/>
            <person name="Forrest D."/>
            <person name="Amos-Landgraf J."/>
            <person name="Schwartz D.C."/>
            <person name="Cheng Z."/>
            <person name="Lindblad-Toh K."/>
            <person name="Eichler E.E."/>
            <person name="Ponting C.P."/>
        </authorList>
    </citation>
    <scope>NUCLEOTIDE SEQUENCE [LARGE SCALE GENOMIC DNA]</scope>
    <source>
        <strain>C57BL/6J</strain>
    </source>
</reference>
<reference key="3">
    <citation type="journal article" date="2005" name="Science">
        <title>The transcriptional landscape of the mammalian genome.</title>
        <authorList>
            <person name="Carninci P."/>
            <person name="Kasukawa T."/>
            <person name="Katayama S."/>
            <person name="Gough J."/>
            <person name="Frith M.C."/>
            <person name="Maeda N."/>
            <person name="Oyama R."/>
            <person name="Ravasi T."/>
            <person name="Lenhard B."/>
            <person name="Wells C."/>
            <person name="Kodzius R."/>
            <person name="Shimokawa K."/>
            <person name="Bajic V.B."/>
            <person name="Brenner S.E."/>
            <person name="Batalov S."/>
            <person name="Forrest A.R."/>
            <person name="Zavolan M."/>
            <person name="Davis M.J."/>
            <person name="Wilming L.G."/>
            <person name="Aidinis V."/>
            <person name="Allen J.E."/>
            <person name="Ambesi-Impiombato A."/>
            <person name="Apweiler R."/>
            <person name="Aturaliya R.N."/>
            <person name="Bailey T.L."/>
            <person name="Bansal M."/>
            <person name="Baxter L."/>
            <person name="Beisel K.W."/>
            <person name="Bersano T."/>
            <person name="Bono H."/>
            <person name="Chalk A.M."/>
            <person name="Chiu K.P."/>
            <person name="Choudhary V."/>
            <person name="Christoffels A."/>
            <person name="Clutterbuck D.R."/>
            <person name="Crowe M.L."/>
            <person name="Dalla E."/>
            <person name="Dalrymple B.P."/>
            <person name="de Bono B."/>
            <person name="Della Gatta G."/>
            <person name="di Bernardo D."/>
            <person name="Down T."/>
            <person name="Engstrom P."/>
            <person name="Fagiolini M."/>
            <person name="Faulkner G."/>
            <person name="Fletcher C.F."/>
            <person name="Fukushima T."/>
            <person name="Furuno M."/>
            <person name="Futaki S."/>
            <person name="Gariboldi M."/>
            <person name="Georgii-Hemming P."/>
            <person name="Gingeras T.R."/>
            <person name="Gojobori T."/>
            <person name="Green R.E."/>
            <person name="Gustincich S."/>
            <person name="Harbers M."/>
            <person name="Hayashi Y."/>
            <person name="Hensch T.K."/>
            <person name="Hirokawa N."/>
            <person name="Hill D."/>
            <person name="Huminiecki L."/>
            <person name="Iacono M."/>
            <person name="Ikeo K."/>
            <person name="Iwama A."/>
            <person name="Ishikawa T."/>
            <person name="Jakt M."/>
            <person name="Kanapin A."/>
            <person name="Katoh M."/>
            <person name="Kawasawa Y."/>
            <person name="Kelso J."/>
            <person name="Kitamura H."/>
            <person name="Kitano H."/>
            <person name="Kollias G."/>
            <person name="Krishnan S.P."/>
            <person name="Kruger A."/>
            <person name="Kummerfeld S.K."/>
            <person name="Kurochkin I.V."/>
            <person name="Lareau L.F."/>
            <person name="Lazarevic D."/>
            <person name="Lipovich L."/>
            <person name="Liu J."/>
            <person name="Liuni S."/>
            <person name="McWilliam S."/>
            <person name="Madan Babu M."/>
            <person name="Madera M."/>
            <person name="Marchionni L."/>
            <person name="Matsuda H."/>
            <person name="Matsuzawa S."/>
            <person name="Miki H."/>
            <person name="Mignone F."/>
            <person name="Miyake S."/>
            <person name="Morris K."/>
            <person name="Mottagui-Tabar S."/>
            <person name="Mulder N."/>
            <person name="Nakano N."/>
            <person name="Nakauchi H."/>
            <person name="Ng P."/>
            <person name="Nilsson R."/>
            <person name="Nishiguchi S."/>
            <person name="Nishikawa S."/>
            <person name="Nori F."/>
            <person name="Ohara O."/>
            <person name="Okazaki Y."/>
            <person name="Orlando V."/>
            <person name="Pang K.C."/>
            <person name="Pavan W.J."/>
            <person name="Pavesi G."/>
            <person name="Pesole G."/>
            <person name="Petrovsky N."/>
            <person name="Piazza S."/>
            <person name="Reed J."/>
            <person name="Reid J.F."/>
            <person name="Ring B.Z."/>
            <person name="Ringwald M."/>
            <person name="Rost B."/>
            <person name="Ruan Y."/>
            <person name="Salzberg S.L."/>
            <person name="Sandelin A."/>
            <person name="Schneider C."/>
            <person name="Schoenbach C."/>
            <person name="Sekiguchi K."/>
            <person name="Semple C.A."/>
            <person name="Seno S."/>
            <person name="Sessa L."/>
            <person name="Sheng Y."/>
            <person name="Shibata Y."/>
            <person name="Shimada H."/>
            <person name="Shimada K."/>
            <person name="Silva D."/>
            <person name="Sinclair B."/>
            <person name="Sperling S."/>
            <person name="Stupka E."/>
            <person name="Sugiura K."/>
            <person name="Sultana R."/>
            <person name="Takenaka Y."/>
            <person name="Taki K."/>
            <person name="Tammoja K."/>
            <person name="Tan S.L."/>
            <person name="Tang S."/>
            <person name="Taylor M.S."/>
            <person name="Tegner J."/>
            <person name="Teichmann S.A."/>
            <person name="Ueda H.R."/>
            <person name="van Nimwegen E."/>
            <person name="Verardo R."/>
            <person name="Wei C.L."/>
            <person name="Yagi K."/>
            <person name="Yamanishi H."/>
            <person name="Zabarovsky E."/>
            <person name="Zhu S."/>
            <person name="Zimmer A."/>
            <person name="Hide W."/>
            <person name="Bult C."/>
            <person name="Grimmond S.M."/>
            <person name="Teasdale R.D."/>
            <person name="Liu E.T."/>
            <person name="Brusic V."/>
            <person name="Quackenbush J."/>
            <person name="Wahlestedt C."/>
            <person name="Mattick J.S."/>
            <person name="Hume D.A."/>
            <person name="Kai C."/>
            <person name="Sasaki D."/>
            <person name="Tomaru Y."/>
            <person name="Fukuda S."/>
            <person name="Kanamori-Katayama M."/>
            <person name="Suzuki M."/>
            <person name="Aoki J."/>
            <person name="Arakawa T."/>
            <person name="Iida J."/>
            <person name="Imamura K."/>
            <person name="Itoh M."/>
            <person name="Kato T."/>
            <person name="Kawaji H."/>
            <person name="Kawagashira N."/>
            <person name="Kawashima T."/>
            <person name="Kojima M."/>
            <person name="Kondo S."/>
            <person name="Konno H."/>
            <person name="Nakano K."/>
            <person name="Ninomiya N."/>
            <person name="Nishio T."/>
            <person name="Okada M."/>
            <person name="Plessy C."/>
            <person name="Shibata K."/>
            <person name="Shiraki T."/>
            <person name="Suzuki S."/>
            <person name="Tagami M."/>
            <person name="Waki K."/>
            <person name="Watahiki A."/>
            <person name="Okamura-Oho Y."/>
            <person name="Suzuki H."/>
            <person name="Kawai J."/>
            <person name="Hayashizaki Y."/>
        </authorList>
    </citation>
    <scope>NUCLEOTIDE SEQUENCE [LARGE SCALE MRNA] OF 1-141; 1112-1832 AND 1967-2350</scope>
    <source>
        <strain>C57BL/6J</strain>
        <tissue>Cerebellum</tissue>
        <tissue>Head</tissue>
        <tissue>Kidney</tissue>
    </source>
</reference>
<reference key="4">
    <citation type="journal article" date="2004" name="Genome Res.">
        <title>The status, quality, and expansion of the NIH full-length cDNA project: the Mammalian Gene Collection (MGC).</title>
        <authorList>
            <consortium name="The MGC Project Team"/>
        </authorList>
    </citation>
    <scope>NUCLEOTIDE SEQUENCE [LARGE SCALE MRNA] OF 968-2350</scope>
    <source>
        <strain>C57BL/6J</strain>
        <tissue>Embryonic germ cell</tissue>
    </source>
</reference>
<reference key="5">
    <citation type="submission" date="2009-01" db="UniProtKB">
        <authorList>
            <person name="Lubec G."/>
            <person name="Sunyer B."/>
            <person name="Chen W.-Q."/>
        </authorList>
    </citation>
    <scope>PROTEIN SEQUENCE OF 1032-1054</scope>
    <scope>IDENTIFICATION BY MASS SPECTROMETRY</scope>
    <source>
        <strain>OF1</strain>
        <tissue>Hippocampus</tissue>
    </source>
</reference>
<reference key="6">
    <citation type="journal article" date="2009" name="Immunity">
        <title>The phagosomal proteome in interferon-gamma-activated macrophages.</title>
        <authorList>
            <person name="Trost M."/>
            <person name="English L."/>
            <person name="Lemieux S."/>
            <person name="Courcelles M."/>
            <person name="Desjardins M."/>
            <person name="Thibault P."/>
        </authorList>
    </citation>
    <scope>IDENTIFICATION BY MASS SPECTROMETRY [LARGE SCALE ANALYSIS]</scope>
</reference>
<reference key="7">
    <citation type="journal article" date="2010" name="Cell">
        <title>A tissue-specific atlas of mouse protein phosphorylation and expression.</title>
        <authorList>
            <person name="Huttlin E.L."/>
            <person name="Jedrychowski M.P."/>
            <person name="Elias J.E."/>
            <person name="Goswami T."/>
            <person name="Rad R."/>
            <person name="Beausoleil S.A."/>
            <person name="Villen J."/>
            <person name="Haas W."/>
            <person name="Sowa M.E."/>
            <person name="Gygi S.P."/>
        </authorList>
    </citation>
    <scope>PHOSPHORYLATION [LARGE SCALE ANALYSIS] AT SER-135; SER-138; SER-294 AND SER-471</scope>
    <scope>IDENTIFICATION BY MASS SPECTROMETRY [LARGE SCALE ANALYSIS]</scope>
    <source>
        <tissue>Kidney</tissue>
        <tissue>Spleen</tissue>
        <tissue>Testis</tissue>
    </source>
</reference>
<protein>
    <recommendedName>
        <fullName>Probable JmjC domain-containing histone demethylation protein 2C</fullName>
        <ecNumber>1.14.11.-</ecNumber>
    </recommendedName>
    <alternativeName>
        <fullName>Jumonji domain-containing protein 1C</fullName>
    </alternativeName>
</protein>
<evidence type="ECO:0000250" key="1"/>
<evidence type="ECO:0000250" key="2">
    <source>
        <dbReference type="UniProtKB" id="Q15652"/>
    </source>
</evidence>
<evidence type="ECO:0000255" key="3"/>
<evidence type="ECO:0000255" key="4">
    <source>
        <dbReference type="PROSITE-ProRule" id="PRU00538"/>
    </source>
</evidence>
<evidence type="ECO:0000256" key="5">
    <source>
        <dbReference type="SAM" id="MobiDB-lite"/>
    </source>
</evidence>
<evidence type="ECO:0000305" key="6"/>
<evidence type="ECO:0007744" key="7">
    <source>
    </source>
</evidence>
<comment type="function">
    <text evidence="1">Probable histone demethylase that specifically demethylates 'Lys-9' of histone H3, thereby playing a central role in histone code. Demethylation of Lys residue generates formaldehyde and succinate. May be involved in hormone-dependent transcriptional activation, by participating in recruitment to androgen-receptor target genes (By similarity).</text>
</comment>
<comment type="cofactor">
    <cofactor evidence="1">
        <name>Fe(2+)</name>
        <dbReference type="ChEBI" id="CHEBI:29033"/>
    </cofactor>
    <text evidence="1">Binds 1 Fe(2+) ion per subunit.</text>
</comment>
<comment type="subcellular location">
    <subcellularLocation>
        <location evidence="1">Nucleus</location>
    </subcellularLocation>
</comment>
<comment type="domain">
    <text evidence="1">Leu-Xaa-Xaa-Leu-Leu (LXXLL) motifs are known to mediate the association with nuclear receptors.</text>
</comment>
<comment type="similarity">
    <text evidence="6">Belongs to the JHDM2 histone demethylase family.</text>
</comment>
<comment type="sequence caution" evidence="6">
    <conflict type="frameshift">
        <sequence resource="EMBL-CDS" id="AAH68318"/>
    </conflict>
</comment>
<comment type="sequence caution" evidence="6">
    <conflict type="miscellaneous discrepancy">
        <sequence resource="EMBL-CDS" id="AAH68318"/>
    </conflict>
    <text>Aberrant splicing.</text>
</comment>
<comment type="sequence caution" evidence="6">
    <conflict type="erroneous termination">
        <sequence resource="EMBL-CDS" id="BAC36783"/>
    </conflict>
    <text>Truncated C-terminus.</text>
</comment>
<comment type="sequence caution" evidence="6">
    <conflict type="erroneous initiation">
        <sequence resource="EMBL-CDS" id="BAC38410"/>
    </conflict>
    <text>Truncated N-terminus.</text>
</comment>
<comment type="sequence caution" evidence="6">
    <conflict type="erroneous initiation">
        <sequence resource="EMBL-CDS" id="BAD32440"/>
    </conflict>
    <text>Extended N-terminus.</text>
</comment>
<proteinExistence type="evidence at protein level"/>